<proteinExistence type="evidence at protein level"/>
<accession>P0C5H2</accession>
<feature type="chain" id="PRO_0000306087" description="Toxin Isom2">
    <location>
        <begin position="1"/>
        <end position="70"/>
    </location>
</feature>
<feature type="domain" description="LCN-type CS-alpha/beta" evidence="2">
    <location>
        <begin position="2"/>
        <end position="65"/>
    </location>
</feature>
<feature type="disulfide bond" evidence="2">
    <location>
        <begin position="16"/>
        <end position="37"/>
    </location>
</feature>
<feature type="disulfide bond" evidence="2">
    <location>
        <begin position="22"/>
        <end position="42"/>
    </location>
</feature>
<feature type="disulfide bond" evidence="2">
    <location>
        <begin position="26"/>
        <end position="44"/>
    </location>
</feature>
<feature type="disulfide bond" evidence="2">
    <location>
        <begin position="38"/>
        <end position="64"/>
    </location>
</feature>
<organism>
    <name type="scientific">Isometrus vittatus</name>
    <name type="common">Bark scorpion</name>
    <name type="synonym">Reddyanus vittatus</name>
    <dbReference type="NCBI Taxonomy" id="463567"/>
    <lineage>
        <taxon>Eukaryota</taxon>
        <taxon>Metazoa</taxon>
        <taxon>Ecdysozoa</taxon>
        <taxon>Arthropoda</taxon>
        <taxon>Chelicerata</taxon>
        <taxon>Arachnida</taxon>
        <taxon>Scorpiones</taxon>
        <taxon>Buthida</taxon>
        <taxon>Buthoidea</taxon>
        <taxon>Buthidae</taxon>
        <taxon>Isometrus</taxon>
    </lineage>
</organism>
<name>SIX2_ISOVI</name>
<comment type="function">
    <text evidence="1 3">Excitatory insect beta-toxins induce a spastic paralysis. They bind voltage-independently at site-4 of sodium channels (Nav) and shift the voltage of activation toward more negative potentials thereby affecting sodium channel activation and promoting spontaneous and repetitive firing (By similarity).</text>
</comment>
<comment type="subcellular location">
    <subcellularLocation>
        <location>Secreted</location>
    </subcellularLocation>
</comment>
<comment type="tissue specificity">
    <text>Expressed by the venom gland.</text>
</comment>
<comment type="domain">
    <text evidence="4">Has the structural arrangement of an alpha-helix connected to antiparallel beta-sheets by disulfide bonds (CS-alpha/beta).</text>
</comment>
<comment type="mass spectrometry"/>
<comment type="similarity">
    <text evidence="4">Belongs to the long (4 C-C) scorpion toxin superfamily. Sodium channel inhibitor family. Beta subfamily.</text>
</comment>
<protein>
    <recommendedName>
        <fullName>Toxin Isom2</fullName>
    </recommendedName>
    <alternativeName>
        <fullName>IsomTx2</fullName>
    </alternativeName>
</protein>
<evidence type="ECO:0000250" key="1"/>
<evidence type="ECO:0000255" key="2">
    <source>
        <dbReference type="PROSITE-ProRule" id="PRU01210"/>
    </source>
</evidence>
<evidence type="ECO:0000269" key="3">
    <source>
    </source>
</evidence>
<evidence type="ECO:0000305" key="4"/>
<dbReference type="SMR" id="P0C5H2"/>
<dbReference type="GO" id="GO:0005576">
    <property type="term" value="C:extracellular region"/>
    <property type="evidence" value="ECO:0007669"/>
    <property type="project" value="UniProtKB-SubCell"/>
</dbReference>
<dbReference type="GO" id="GO:0019871">
    <property type="term" value="F:sodium channel inhibitor activity"/>
    <property type="evidence" value="ECO:0007669"/>
    <property type="project" value="InterPro"/>
</dbReference>
<dbReference type="GO" id="GO:0090729">
    <property type="term" value="F:toxin activity"/>
    <property type="evidence" value="ECO:0007669"/>
    <property type="project" value="UniProtKB-KW"/>
</dbReference>
<dbReference type="GO" id="GO:0006952">
    <property type="term" value="P:defense response"/>
    <property type="evidence" value="ECO:0007669"/>
    <property type="project" value="InterPro"/>
</dbReference>
<dbReference type="CDD" id="cd23106">
    <property type="entry name" value="neurotoxins_LC_scorpion"/>
    <property type="match status" value="1"/>
</dbReference>
<dbReference type="Gene3D" id="3.30.30.10">
    <property type="entry name" value="Knottin, scorpion toxin-like"/>
    <property type="match status" value="1"/>
</dbReference>
<dbReference type="InterPro" id="IPR044062">
    <property type="entry name" value="LCN-type_CS_alpha_beta_dom"/>
</dbReference>
<dbReference type="InterPro" id="IPR003614">
    <property type="entry name" value="Scorpion_toxin-like"/>
</dbReference>
<dbReference type="InterPro" id="IPR036574">
    <property type="entry name" value="Scorpion_toxin-like_sf"/>
</dbReference>
<dbReference type="InterPro" id="IPR002061">
    <property type="entry name" value="Scorpion_toxinL/defensin"/>
</dbReference>
<dbReference type="Pfam" id="PF00537">
    <property type="entry name" value="Toxin_3"/>
    <property type="match status" value="1"/>
</dbReference>
<dbReference type="SMART" id="SM00505">
    <property type="entry name" value="Knot1"/>
    <property type="match status" value="1"/>
</dbReference>
<dbReference type="SUPFAM" id="SSF57095">
    <property type="entry name" value="Scorpion toxin-like"/>
    <property type="match status" value="1"/>
</dbReference>
<dbReference type="PROSITE" id="PS51863">
    <property type="entry name" value="LCN_CSAB"/>
    <property type="match status" value="1"/>
</dbReference>
<reference key="1">
    <citation type="journal article" date="2003" name="Toxicon">
        <title>Primary structure and electrophysiological characterization of two almost identical isoforms of toxin from Isometrus vittatus (family: Buthidae) scorpion venom.</title>
        <authorList>
            <person name="Coronas F.V."/>
            <person name="Stankiewicz M."/>
            <person name="Batista C.V.F."/>
            <person name="Giraud S."/>
            <person name="Alam J.M."/>
            <person name="Possani L.D."/>
            <person name="Mebs D."/>
            <person name="Pelhate M."/>
        </authorList>
    </citation>
    <scope>PROTEIN SEQUENCE</scope>
    <scope>FUNCTION</scope>
    <scope>MASS SPECTROMETRY</scope>
    <source>
        <tissue>Venom</tissue>
    </source>
</reference>
<sequence>KKNGYAVDSSGKAPECLLSNYCNNECTKVHYADKGYCCLLSCYCFGLSDDKKVLDISDTRKKYCDYTIIN</sequence>
<keyword id="KW-0903">Direct protein sequencing</keyword>
<keyword id="KW-1015">Disulfide bond</keyword>
<keyword id="KW-0872">Ion channel impairing toxin</keyword>
<keyword id="KW-0528">Neurotoxin</keyword>
<keyword id="KW-0964">Secreted</keyword>
<keyword id="KW-0800">Toxin</keyword>
<keyword id="KW-0738">Voltage-gated sodium channel impairing toxin</keyword>